<protein>
    <recommendedName>
        <fullName evidence="4">Capsid protein</fullName>
    </recommendedName>
    <alternativeName>
        <fullName>Viral protein 2</fullName>
        <shortName>VP2</shortName>
    </alternativeName>
</protein>
<accession>W6JIC6</accession>
<sequence>MARTKSKPRKRTTVRKARRSVKRRTTTKGTKRKTAGDPVTKAKRGVATSSPFAAHHAVRMNPFSGATTQPKIPDGGFTSSLSRRLQNVVEVTNASNEGIMHLVMAPTMGVPICVTHTTEGASTRSGATLKPSYLGFLGQGVGLETKVGGVIKWPIANTDTGDVINAADFAKWRVVSQGLQITLNNVDDENDGWFEAVRFNWRNDNEDICLTSLDGTDTGNVIGAAPNLNGLPLLTANIVEMPGYKSGLLKDIKDYQFMLHPQQTRHDPVEITKSIDFVGGTDLNYDTQSKKANLGDSAAGTLLKQGLVDQNMDWMYIRIHPRSNTGAAGQTGSKLICNYIQNLEFAFSPDSDLATYMTTNRMDPKSAKINDQLNNNQDAANKKREFN</sequence>
<reference key="1">
    <citation type="journal article" date="2013" name="PLoS ONE">
        <title>Isolation and Characterization of a Single-Stranded DNA Virus Infecting the Marine Diatom Chaetoceros sp. Strain SS628-11 Isolated from Western Japan.</title>
        <authorList>
            <person name="Kimura K."/>
            <person name="Tomaru Y."/>
        </authorList>
    </citation>
    <scope>NUCLEOTIDE SEQUENCE [LARGE SCALE GENOMIC DNA]</scope>
    <source>
        <strain>Csp07DNAV</strain>
    </source>
</reference>
<keyword id="KW-1048">Host nucleus</keyword>
<keyword id="KW-1185">Reference proteome</keyword>
<keyword id="KW-0946">Virion</keyword>
<organism>
    <name type="scientific">Chaetoceros protobacilladnavirus 2</name>
    <name type="common">Chaetoceros sp. DNA virus 7</name>
    <dbReference type="NCBI Taxonomy" id="3052702"/>
    <lineage>
        <taxon>Viruses</taxon>
        <taxon>Monodnaviria</taxon>
        <taxon>Shotokuvirae</taxon>
        <taxon>Cressdnaviricota</taxon>
        <taxon>Arfiviricetes</taxon>
        <taxon>Baphyvirales</taxon>
        <taxon>Bacilladnaviridae</taxon>
        <taxon>Protobacilladnavirus</taxon>
    </lineage>
</organism>
<organismHost>
    <name type="scientific">Chaetoceros</name>
    <dbReference type="NCBI Taxonomy" id="49237"/>
</organismHost>
<feature type="chain" id="PRO_0000445641" description="Capsid protein">
    <location>
        <begin position="1"/>
        <end position="387"/>
    </location>
</feature>
<feature type="region of interest" description="Disordered" evidence="3">
    <location>
        <begin position="1"/>
        <end position="47"/>
    </location>
</feature>
<feature type="region of interest" description="Disordered" evidence="3">
    <location>
        <begin position="365"/>
        <end position="387"/>
    </location>
</feature>
<feature type="short sequence motif" description="Nuclear localization signal 1" evidence="2">
    <location>
        <begin position="8"/>
        <end position="15"/>
    </location>
</feature>
<feature type="short sequence motif" description="Nuclear localization signal 2" evidence="2">
    <location>
        <begin position="30"/>
        <end position="37"/>
    </location>
</feature>
<feature type="compositionally biased region" description="Basic residues" evidence="3">
    <location>
        <begin position="1"/>
        <end position="33"/>
    </location>
</feature>
<feature type="compositionally biased region" description="Low complexity" evidence="3">
    <location>
        <begin position="370"/>
        <end position="379"/>
    </location>
</feature>
<comment type="function">
    <text evidence="1 4">Self-assembles to form the virion icosahedral capsid.</text>
</comment>
<comment type="subcellular location">
    <subcellularLocation>
        <location evidence="4">Host nucleus</location>
    </subcellularLocation>
    <subcellularLocation>
        <location evidence="4">Virion</location>
    </subcellularLocation>
</comment>
<dbReference type="EMBL" id="AB844272">
    <property type="protein sequence ID" value="BAO48207.1"/>
    <property type="molecule type" value="Genomic_DNA"/>
</dbReference>
<dbReference type="RefSeq" id="YP_009001776.1">
    <property type="nucleotide sequence ID" value="NC_023441.1"/>
</dbReference>
<dbReference type="SMR" id="W6JIC6"/>
<dbReference type="GeneID" id="18266918"/>
<dbReference type="KEGG" id="vg:18266918"/>
<dbReference type="Proteomes" id="UP000052105">
    <property type="component" value="Segment"/>
</dbReference>
<dbReference type="GO" id="GO:0042025">
    <property type="term" value="C:host cell nucleus"/>
    <property type="evidence" value="ECO:0007669"/>
    <property type="project" value="UniProtKB-SubCell"/>
</dbReference>
<dbReference type="GO" id="GO:0044423">
    <property type="term" value="C:virion component"/>
    <property type="evidence" value="ECO:0007669"/>
    <property type="project" value="UniProtKB-KW"/>
</dbReference>
<name>CAPSD_CPBDV</name>
<proteinExistence type="inferred from homology"/>
<evidence type="ECO:0000255" key="1"/>
<evidence type="ECO:0000255" key="2">
    <source>
        <dbReference type="PROSITE-ProRule" id="PRU00768"/>
    </source>
</evidence>
<evidence type="ECO:0000256" key="3">
    <source>
        <dbReference type="SAM" id="MobiDB-lite"/>
    </source>
</evidence>
<evidence type="ECO:0000305" key="4"/>